<feature type="chain" id="PRO_0000385531" description="Mitochondrial substrate carrier family protein Y">
    <location>
        <begin position="1"/>
        <end position="436"/>
    </location>
</feature>
<feature type="topological domain" description="Mitochondrial intermembrane" evidence="1">
    <location>
        <begin position="1"/>
        <end position="137"/>
    </location>
</feature>
<feature type="transmembrane region" description="Helical; Name=1" evidence="2">
    <location>
        <begin position="138"/>
        <end position="158"/>
    </location>
</feature>
<feature type="topological domain" description="Mitochondrial matrix" evidence="1">
    <location>
        <begin position="159"/>
        <end position="194"/>
    </location>
</feature>
<feature type="transmembrane region" description="Helical; Name=2" evidence="2">
    <location>
        <begin position="195"/>
        <end position="215"/>
    </location>
</feature>
<feature type="topological domain" description="Mitochondrial intermembrane" evidence="1">
    <location>
        <begin position="216"/>
        <end position="238"/>
    </location>
</feature>
<feature type="transmembrane region" description="Helical; Name=3" evidence="2">
    <location>
        <begin position="239"/>
        <end position="259"/>
    </location>
</feature>
<feature type="topological domain" description="Mitochondrial matrix" evidence="1">
    <location>
        <begin position="260"/>
        <end position="313"/>
    </location>
</feature>
<feature type="transmembrane region" description="Helical; Name=4" evidence="2">
    <location>
        <begin position="314"/>
        <end position="334"/>
    </location>
</feature>
<feature type="topological domain" description="Mitochondrial intermembrane" evidence="1">
    <location>
        <begin position="335"/>
        <end position="347"/>
    </location>
</feature>
<feature type="transmembrane region" description="Helical; Name=5" evidence="2">
    <location>
        <begin position="348"/>
        <end position="368"/>
    </location>
</feature>
<feature type="topological domain" description="Mitochondrial matrix" evidence="1">
    <location>
        <begin position="369"/>
        <end position="413"/>
    </location>
</feature>
<feature type="transmembrane region" description="Helical; Name=6" evidence="2">
    <location>
        <begin position="414"/>
        <end position="434"/>
    </location>
</feature>
<feature type="topological domain" description="Mitochondrial intermembrane" evidence="1">
    <location>
        <begin position="435"/>
        <end position="436"/>
    </location>
</feature>
<feature type="repeat" description="Solcar 1">
    <location>
        <begin position="135"/>
        <end position="226"/>
    </location>
</feature>
<feature type="repeat" description="Solcar 2">
    <location>
        <begin position="236"/>
        <end position="334"/>
    </location>
</feature>
<feature type="repeat" description="Solcar 3">
    <location>
        <begin position="350"/>
        <end position="436"/>
    </location>
</feature>
<feature type="region of interest" description="Disordered" evidence="3">
    <location>
        <begin position="1"/>
        <end position="102"/>
    </location>
</feature>
<organism>
    <name type="scientific">Dictyostelium discoideum</name>
    <name type="common">Social amoeba</name>
    <dbReference type="NCBI Taxonomy" id="44689"/>
    <lineage>
        <taxon>Eukaryota</taxon>
        <taxon>Amoebozoa</taxon>
        <taxon>Evosea</taxon>
        <taxon>Eumycetozoa</taxon>
        <taxon>Dictyostelia</taxon>
        <taxon>Dictyosteliales</taxon>
        <taxon>Dictyosteliaceae</taxon>
        <taxon>Dictyostelium</taxon>
    </lineage>
</organism>
<proteinExistence type="inferred from homology"/>
<evidence type="ECO:0000250" key="1"/>
<evidence type="ECO:0000255" key="2"/>
<evidence type="ECO:0000256" key="3">
    <source>
        <dbReference type="SAM" id="MobiDB-lite"/>
    </source>
</evidence>
<evidence type="ECO:0000305" key="4"/>
<gene>
    <name type="primary">mcfY</name>
    <name type="ORF">DDB_G0274501</name>
</gene>
<dbReference type="EMBL" id="AAFI02000012">
    <property type="protein sequence ID" value="EAL70143.1"/>
    <property type="molecule type" value="Genomic_DNA"/>
</dbReference>
<dbReference type="RefSeq" id="XP_644114.1">
    <property type="nucleotide sequence ID" value="XM_639022.1"/>
</dbReference>
<dbReference type="SMR" id="Q86HN8"/>
<dbReference type="PaxDb" id="44689-DDB0234132"/>
<dbReference type="EnsemblProtists" id="EAL70143">
    <property type="protein sequence ID" value="EAL70143"/>
    <property type="gene ID" value="DDB_G0274501"/>
</dbReference>
<dbReference type="GeneID" id="8619544"/>
<dbReference type="KEGG" id="ddi:DDB_G0274501"/>
<dbReference type="dictyBase" id="DDB_G0274501">
    <property type="gene designation" value="mcfY"/>
</dbReference>
<dbReference type="VEuPathDB" id="AmoebaDB:DDB_G0274501"/>
<dbReference type="eggNOG" id="KOG0762">
    <property type="taxonomic scope" value="Eukaryota"/>
</dbReference>
<dbReference type="HOGENOM" id="CLU_015166_16_1_1"/>
<dbReference type="InParanoid" id="Q86HN8"/>
<dbReference type="OMA" id="TFDCLNQ"/>
<dbReference type="PhylomeDB" id="Q86HN8"/>
<dbReference type="Reactome" id="R-DDI-70635">
    <property type="pathway name" value="Urea cycle"/>
</dbReference>
<dbReference type="PRO" id="PR:Q86HN8"/>
<dbReference type="Proteomes" id="UP000002195">
    <property type="component" value="Chromosome 2"/>
</dbReference>
<dbReference type="GO" id="GO:0005743">
    <property type="term" value="C:mitochondrial inner membrane"/>
    <property type="evidence" value="ECO:0007669"/>
    <property type="project" value="UniProtKB-SubCell"/>
</dbReference>
<dbReference type="GO" id="GO:0005739">
    <property type="term" value="C:mitochondrion"/>
    <property type="evidence" value="ECO:0000318"/>
    <property type="project" value="GO_Central"/>
</dbReference>
<dbReference type="GO" id="GO:0000064">
    <property type="term" value="F:L-ornithine transmembrane transporter activity"/>
    <property type="evidence" value="ECO:0000318"/>
    <property type="project" value="GO_Central"/>
</dbReference>
<dbReference type="GO" id="GO:1990575">
    <property type="term" value="P:mitochondrial L-ornithine transmembrane transport"/>
    <property type="evidence" value="ECO:0000318"/>
    <property type="project" value="GO_Central"/>
</dbReference>
<dbReference type="FunFam" id="1.50.40.10:FF:000194">
    <property type="entry name" value="Mitochondrial substrate carrier family protein Y"/>
    <property type="match status" value="1"/>
</dbReference>
<dbReference type="Gene3D" id="1.50.40.10">
    <property type="entry name" value="Mitochondrial carrier domain"/>
    <property type="match status" value="1"/>
</dbReference>
<dbReference type="InterPro" id="IPR050567">
    <property type="entry name" value="Mitochondrial_Carrier"/>
</dbReference>
<dbReference type="InterPro" id="IPR018108">
    <property type="entry name" value="Mitochondrial_sb/sol_carrier"/>
</dbReference>
<dbReference type="InterPro" id="IPR023395">
    <property type="entry name" value="Mt_carrier_dom_sf"/>
</dbReference>
<dbReference type="PANTHER" id="PTHR45624">
    <property type="entry name" value="MITOCHONDRIAL BASIC AMINO ACIDS TRANSPORTER-RELATED"/>
    <property type="match status" value="1"/>
</dbReference>
<dbReference type="PANTHER" id="PTHR45624:SF12">
    <property type="entry name" value="MITOCHONDRIAL ORNITHINE TRANSPORTER 1"/>
    <property type="match status" value="1"/>
</dbReference>
<dbReference type="Pfam" id="PF00153">
    <property type="entry name" value="Mito_carr"/>
    <property type="match status" value="3"/>
</dbReference>
<dbReference type="SUPFAM" id="SSF103506">
    <property type="entry name" value="Mitochondrial carrier"/>
    <property type="match status" value="1"/>
</dbReference>
<dbReference type="PROSITE" id="PS50920">
    <property type="entry name" value="SOLCAR"/>
    <property type="match status" value="3"/>
</dbReference>
<sequence>MENNNKNINTTNNSTTINTNNNNNPINKNNNNNNINNNNNNNINNINNINNVNNNNNNNNNNNNNNNNNNNNNNNNNNNNNNNNNNINNNNNNINNNNINKKNINNINKNKINNNNNNEIGEEKAVEGGFLAGLSRNVTRIIGSFSSGMAEESAGYPLDLIKTRIQLSQSGVSGGGGTNTSIIKIFKDVIKTEGVIGLFKGLSSPLILSALVTAIQFGLFEDTLKYFRKHQYFKNHDTLSLLFSGSIAGFAQSFITCPVDLVKIQMQIQGIPSSQPNSNNNNNNNKAKGNSYFTKLIYREKGLLGFYQGLSPTLFRDVPGLAIFFTTYETLKKQFGQPELSTQSPTEFIKSFIPIVLSGGSAGVFYHGLTHPFDIAKTLIQSDRSATKYKGTFDCLKQVYQNQGPKSLFKGFSAVAIKSFQSNAVGFLVYEMVINL</sequence>
<accession>Q86HN8</accession>
<accession>Q555F5</accession>
<reference key="1">
    <citation type="journal article" date="2002" name="Nature">
        <title>Sequence and analysis of chromosome 2 of Dictyostelium discoideum.</title>
        <authorList>
            <person name="Gloeckner G."/>
            <person name="Eichinger L."/>
            <person name="Szafranski K."/>
            <person name="Pachebat J.A."/>
            <person name="Bankier A.T."/>
            <person name="Dear P.H."/>
            <person name="Lehmann R."/>
            <person name="Baumgart C."/>
            <person name="Parra G."/>
            <person name="Abril J.F."/>
            <person name="Guigo R."/>
            <person name="Kumpf K."/>
            <person name="Tunggal B."/>
            <person name="Cox E.C."/>
            <person name="Quail M.A."/>
            <person name="Platzer M."/>
            <person name="Rosenthal A."/>
            <person name="Noegel A.A."/>
        </authorList>
    </citation>
    <scope>NUCLEOTIDE SEQUENCE [LARGE SCALE GENOMIC DNA]</scope>
    <source>
        <strain>AX4</strain>
    </source>
</reference>
<reference key="2">
    <citation type="journal article" date="2005" name="Nature">
        <title>The genome of the social amoeba Dictyostelium discoideum.</title>
        <authorList>
            <person name="Eichinger L."/>
            <person name="Pachebat J.A."/>
            <person name="Gloeckner G."/>
            <person name="Rajandream M.A."/>
            <person name="Sucgang R."/>
            <person name="Berriman M."/>
            <person name="Song J."/>
            <person name="Olsen R."/>
            <person name="Szafranski K."/>
            <person name="Xu Q."/>
            <person name="Tunggal B."/>
            <person name="Kummerfeld S."/>
            <person name="Madera M."/>
            <person name="Konfortov B.A."/>
            <person name="Rivero F."/>
            <person name="Bankier A.T."/>
            <person name="Lehmann R."/>
            <person name="Hamlin N."/>
            <person name="Davies R."/>
            <person name="Gaudet P."/>
            <person name="Fey P."/>
            <person name="Pilcher K."/>
            <person name="Chen G."/>
            <person name="Saunders D."/>
            <person name="Sodergren E.J."/>
            <person name="Davis P."/>
            <person name="Kerhornou A."/>
            <person name="Nie X."/>
            <person name="Hall N."/>
            <person name="Anjard C."/>
            <person name="Hemphill L."/>
            <person name="Bason N."/>
            <person name="Farbrother P."/>
            <person name="Desany B."/>
            <person name="Just E."/>
            <person name="Morio T."/>
            <person name="Rost R."/>
            <person name="Churcher C.M."/>
            <person name="Cooper J."/>
            <person name="Haydock S."/>
            <person name="van Driessche N."/>
            <person name="Cronin A."/>
            <person name="Goodhead I."/>
            <person name="Muzny D.M."/>
            <person name="Mourier T."/>
            <person name="Pain A."/>
            <person name="Lu M."/>
            <person name="Harper D."/>
            <person name="Lindsay R."/>
            <person name="Hauser H."/>
            <person name="James K.D."/>
            <person name="Quiles M."/>
            <person name="Madan Babu M."/>
            <person name="Saito T."/>
            <person name="Buchrieser C."/>
            <person name="Wardroper A."/>
            <person name="Felder M."/>
            <person name="Thangavelu M."/>
            <person name="Johnson D."/>
            <person name="Knights A."/>
            <person name="Loulseged H."/>
            <person name="Mungall K.L."/>
            <person name="Oliver K."/>
            <person name="Price C."/>
            <person name="Quail M.A."/>
            <person name="Urushihara H."/>
            <person name="Hernandez J."/>
            <person name="Rabbinowitsch E."/>
            <person name="Steffen D."/>
            <person name="Sanders M."/>
            <person name="Ma J."/>
            <person name="Kohara Y."/>
            <person name="Sharp S."/>
            <person name="Simmonds M.N."/>
            <person name="Spiegler S."/>
            <person name="Tivey A."/>
            <person name="Sugano S."/>
            <person name="White B."/>
            <person name="Walker D."/>
            <person name="Woodward J.R."/>
            <person name="Winckler T."/>
            <person name="Tanaka Y."/>
            <person name="Shaulsky G."/>
            <person name="Schleicher M."/>
            <person name="Weinstock G.M."/>
            <person name="Rosenthal A."/>
            <person name="Cox E.C."/>
            <person name="Chisholm R.L."/>
            <person name="Gibbs R.A."/>
            <person name="Loomis W.F."/>
            <person name="Platzer M."/>
            <person name="Kay R.R."/>
            <person name="Williams J.G."/>
            <person name="Dear P.H."/>
            <person name="Noegel A.A."/>
            <person name="Barrell B.G."/>
            <person name="Kuspa A."/>
        </authorList>
    </citation>
    <scope>NUCLEOTIDE SEQUENCE [LARGE SCALE GENOMIC DNA]</scope>
    <source>
        <strain>AX4</strain>
    </source>
</reference>
<reference key="3">
    <citation type="journal article" date="2007" name="Biochimie">
        <title>Mitochondrial carrier family: repertoire and peculiarities of the cellular slime mould Dictyostelium discoideum.</title>
        <authorList>
            <person name="Satre M."/>
            <person name="Mattei S."/>
            <person name="Aubry L."/>
            <person name="Gaudet P."/>
            <person name="Pelosi L."/>
            <person name="Brandolin G."/>
            <person name="Klein G."/>
        </authorList>
    </citation>
    <scope>REVIEW</scope>
</reference>
<comment type="function">
    <text evidence="1">Mitochondrial solute carriers shuttle metabolites, nucleotides, and cofactors through the mitochondrial inner membrane.</text>
</comment>
<comment type="subcellular location">
    <subcellularLocation>
        <location evidence="1">Mitochondrion inner membrane</location>
        <topology evidence="1">Multi-pass membrane protein</topology>
    </subcellularLocation>
</comment>
<comment type="similarity">
    <text evidence="4">Belongs to the mitochondrial carrier (TC 2.A.29) family.</text>
</comment>
<protein>
    <recommendedName>
        <fullName>Mitochondrial substrate carrier family protein Y</fullName>
    </recommendedName>
</protein>
<keyword id="KW-0472">Membrane</keyword>
<keyword id="KW-0496">Mitochondrion</keyword>
<keyword id="KW-0999">Mitochondrion inner membrane</keyword>
<keyword id="KW-1185">Reference proteome</keyword>
<keyword id="KW-0677">Repeat</keyword>
<keyword id="KW-0812">Transmembrane</keyword>
<keyword id="KW-1133">Transmembrane helix</keyword>
<keyword id="KW-0813">Transport</keyword>
<name>MCFY_DICDI</name>